<sequence length="242" mass="26161">MPSPKYKRVVLKLSGEALAGEKGYGIDPEVVNSIAGQIAEIIKEFGIQVAVVVGGGNIWRGLSGSAKGMDRATADYMGMLATVINSLALQDALEKLGIDTRVQTAIEMRQIAEPYIRRRAIRHLEKGRVVIFAAGTGNPYFSTDTTAALRAAEIEAEVILMAKRVDGVYDSDPLKNPNAQKFDELEYIEVLNRGLGVMDSTATSLCMDNNIPLIVFNLEVPGNIKRVILGENIGTIVGGERK</sequence>
<name>PYRH_CARHZ</name>
<accession>Q3AB79</accession>
<keyword id="KW-0021">Allosteric enzyme</keyword>
<keyword id="KW-0067">ATP-binding</keyword>
<keyword id="KW-0963">Cytoplasm</keyword>
<keyword id="KW-0418">Kinase</keyword>
<keyword id="KW-0547">Nucleotide-binding</keyword>
<keyword id="KW-0665">Pyrimidine biosynthesis</keyword>
<keyword id="KW-1185">Reference proteome</keyword>
<keyword id="KW-0808">Transferase</keyword>
<organism>
    <name type="scientific">Carboxydothermus hydrogenoformans (strain ATCC BAA-161 / DSM 6008 / Z-2901)</name>
    <dbReference type="NCBI Taxonomy" id="246194"/>
    <lineage>
        <taxon>Bacteria</taxon>
        <taxon>Bacillati</taxon>
        <taxon>Bacillota</taxon>
        <taxon>Clostridia</taxon>
        <taxon>Thermoanaerobacterales</taxon>
        <taxon>Thermoanaerobacteraceae</taxon>
        <taxon>Carboxydothermus</taxon>
    </lineage>
</organism>
<gene>
    <name evidence="1" type="primary">pyrH</name>
    <name type="ordered locus">CHY_1785</name>
</gene>
<dbReference type="EC" id="2.7.4.22" evidence="1"/>
<dbReference type="EMBL" id="CP000141">
    <property type="protein sequence ID" value="ABB15557.1"/>
    <property type="molecule type" value="Genomic_DNA"/>
</dbReference>
<dbReference type="RefSeq" id="WP_011344679.1">
    <property type="nucleotide sequence ID" value="NC_007503.1"/>
</dbReference>
<dbReference type="SMR" id="Q3AB79"/>
<dbReference type="FunCoup" id="Q3AB79">
    <property type="interactions" value="542"/>
</dbReference>
<dbReference type="STRING" id="246194.CHY_1785"/>
<dbReference type="KEGG" id="chy:CHY_1785"/>
<dbReference type="eggNOG" id="COG0528">
    <property type="taxonomic scope" value="Bacteria"/>
</dbReference>
<dbReference type="HOGENOM" id="CLU_033861_0_0_9"/>
<dbReference type="InParanoid" id="Q3AB79"/>
<dbReference type="OrthoDB" id="9807458at2"/>
<dbReference type="UniPathway" id="UPA00159">
    <property type="reaction ID" value="UER00275"/>
</dbReference>
<dbReference type="Proteomes" id="UP000002706">
    <property type="component" value="Chromosome"/>
</dbReference>
<dbReference type="GO" id="GO:0005737">
    <property type="term" value="C:cytoplasm"/>
    <property type="evidence" value="ECO:0007669"/>
    <property type="project" value="UniProtKB-SubCell"/>
</dbReference>
<dbReference type="GO" id="GO:0005524">
    <property type="term" value="F:ATP binding"/>
    <property type="evidence" value="ECO:0007669"/>
    <property type="project" value="UniProtKB-KW"/>
</dbReference>
<dbReference type="GO" id="GO:0033862">
    <property type="term" value="F:UMP kinase activity"/>
    <property type="evidence" value="ECO:0007669"/>
    <property type="project" value="UniProtKB-EC"/>
</dbReference>
<dbReference type="GO" id="GO:0044210">
    <property type="term" value="P:'de novo' CTP biosynthetic process"/>
    <property type="evidence" value="ECO:0007669"/>
    <property type="project" value="UniProtKB-UniRule"/>
</dbReference>
<dbReference type="GO" id="GO:0006225">
    <property type="term" value="P:UDP biosynthetic process"/>
    <property type="evidence" value="ECO:0007669"/>
    <property type="project" value="TreeGrafter"/>
</dbReference>
<dbReference type="CDD" id="cd04254">
    <property type="entry name" value="AAK_UMPK-PyrH-Ec"/>
    <property type="match status" value="1"/>
</dbReference>
<dbReference type="FunFam" id="3.40.1160.10:FF:000001">
    <property type="entry name" value="Uridylate kinase"/>
    <property type="match status" value="1"/>
</dbReference>
<dbReference type="Gene3D" id="3.40.1160.10">
    <property type="entry name" value="Acetylglutamate kinase-like"/>
    <property type="match status" value="1"/>
</dbReference>
<dbReference type="HAMAP" id="MF_01220_B">
    <property type="entry name" value="PyrH_B"/>
    <property type="match status" value="1"/>
</dbReference>
<dbReference type="InterPro" id="IPR036393">
    <property type="entry name" value="AceGlu_kinase-like_sf"/>
</dbReference>
<dbReference type="InterPro" id="IPR001048">
    <property type="entry name" value="Asp/Glu/Uridylate_kinase"/>
</dbReference>
<dbReference type="InterPro" id="IPR011817">
    <property type="entry name" value="Uridylate_kinase"/>
</dbReference>
<dbReference type="InterPro" id="IPR015963">
    <property type="entry name" value="Uridylate_kinase_bac"/>
</dbReference>
<dbReference type="NCBIfam" id="TIGR02075">
    <property type="entry name" value="pyrH_bact"/>
    <property type="match status" value="1"/>
</dbReference>
<dbReference type="PANTHER" id="PTHR42833">
    <property type="entry name" value="URIDYLATE KINASE"/>
    <property type="match status" value="1"/>
</dbReference>
<dbReference type="PANTHER" id="PTHR42833:SF4">
    <property type="entry name" value="URIDYLATE KINASE PUMPKIN, CHLOROPLASTIC"/>
    <property type="match status" value="1"/>
</dbReference>
<dbReference type="Pfam" id="PF00696">
    <property type="entry name" value="AA_kinase"/>
    <property type="match status" value="1"/>
</dbReference>
<dbReference type="PIRSF" id="PIRSF005650">
    <property type="entry name" value="Uridylate_kin"/>
    <property type="match status" value="1"/>
</dbReference>
<dbReference type="SUPFAM" id="SSF53633">
    <property type="entry name" value="Carbamate kinase-like"/>
    <property type="match status" value="1"/>
</dbReference>
<feature type="chain" id="PRO_1000053904" description="Uridylate kinase">
    <location>
        <begin position="1"/>
        <end position="242"/>
    </location>
</feature>
<feature type="region of interest" description="Involved in allosteric activation by GTP" evidence="1">
    <location>
        <begin position="20"/>
        <end position="25"/>
    </location>
</feature>
<feature type="binding site" evidence="1">
    <location>
        <begin position="12"/>
        <end position="15"/>
    </location>
    <ligand>
        <name>ATP</name>
        <dbReference type="ChEBI" id="CHEBI:30616"/>
    </ligand>
</feature>
<feature type="binding site" evidence="1">
    <location>
        <position position="55"/>
    </location>
    <ligand>
        <name>UMP</name>
        <dbReference type="ChEBI" id="CHEBI:57865"/>
    </ligand>
</feature>
<feature type="binding site" evidence="1">
    <location>
        <position position="56"/>
    </location>
    <ligand>
        <name>ATP</name>
        <dbReference type="ChEBI" id="CHEBI:30616"/>
    </ligand>
</feature>
<feature type="binding site" evidence="1">
    <location>
        <position position="60"/>
    </location>
    <ligand>
        <name>ATP</name>
        <dbReference type="ChEBI" id="CHEBI:30616"/>
    </ligand>
</feature>
<feature type="binding site" evidence="1">
    <location>
        <position position="75"/>
    </location>
    <ligand>
        <name>UMP</name>
        <dbReference type="ChEBI" id="CHEBI:57865"/>
    </ligand>
</feature>
<feature type="binding site" evidence="1">
    <location>
        <begin position="136"/>
        <end position="143"/>
    </location>
    <ligand>
        <name>UMP</name>
        <dbReference type="ChEBI" id="CHEBI:57865"/>
    </ligand>
</feature>
<feature type="binding site" evidence="1">
    <location>
        <position position="169"/>
    </location>
    <ligand>
        <name>ATP</name>
        <dbReference type="ChEBI" id="CHEBI:30616"/>
    </ligand>
</feature>
<feature type="binding site" evidence="1">
    <location>
        <position position="172"/>
    </location>
    <ligand>
        <name>ATP</name>
        <dbReference type="ChEBI" id="CHEBI:30616"/>
    </ligand>
</feature>
<comment type="function">
    <text evidence="1">Catalyzes the reversible phosphorylation of UMP to UDP.</text>
</comment>
<comment type="catalytic activity">
    <reaction evidence="1">
        <text>UMP + ATP = UDP + ADP</text>
        <dbReference type="Rhea" id="RHEA:24400"/>
        <dbReference type="ChEBI" id="CHEBI:30616"/>
        <dbReference type="ChEBI" id="CHEBI:57865"/>
        <dbReference type="ChEBI" id="CHEBI:58223"/>
        <dbReference type="ChEBI" id="CHEBI:456216"/>
        <dbReference type="EC" id="2.7.4.22"/>
    </reaction>
</comment>
<comment type="activity regulation">
    <text evidence="1">Allosterically activated by GTP. Inhibited by UTP.</text>
</comment>
<comment type="pathway">
    <text evidence="1">Pyrimidine metabolism; CTP biosynthesis via de novo pathway; UDP from UMP (UMPK route): step 1/1.</text>
</comment>
<comment type="subunit">
    <text evidence="1">Homohexamer.</text>
</comment>
<comment type="subcellular location">
    <subcellularLocation>
        <location evidence="1">Cytoplasm</location>
    </subcellularLocation>
</comment>
<comment type="similarity">
    <text evidence="1">Belongs to the UMP kinase family.</text>
</comment>
<evidence type="ECO:0000255" key="1">
    <source>
        <dbReference type="HAMAP-Rule" id="MF_01220"/>
    </source>
</evidence>
<reference key="1">
    <citation type="journal article" date="2005" name="PLoS Genet.">
        <title>Life in hot carbon monoxide: the complete genome sequence of Carboxydothermus hydrogenoformans Z-2901.</title>
        <authorList>
            <person name="Wu M."/>
            <person name="Ren Q."/>
            <person name="Durkin A.S."/>
            <person name="Daugherty S.C."/>
            <person name="Brinkac L.M."/>
            <person name="Dodson R.J."/>
            <person name="Madupu R."/>
            <person name="Sullivan S.A."/>
            <person name="Kolonay J.F."/>
            <person name="Nelson W.C."/>
            <person name="Tallon L.J."/>
            <person name="Jones K.M."/>
            <person name="Ulrich L.E."/>
            <person name="Gonzalez J.M."/>
            <person name="Zhulin I.B."/>
            <person name="Robb F.T."/>
            <person name="Eisen J.A."/>
        </authorList>
    </citation>
    <scope>NUCLEOTIDE SEQUENCE [LARGE SCALE GENOMIC DNA]</scope>
    <source>
        <strain>ATCC BAA-161 / DSM 6008 / Z-2901</strain>
    </source>
</reference>
<proteinExistence type="inferred from homology"/>
<protein>
    <recommendedName>
        <fullName evidence="1">Uridylate kinase</fullName>
        <shortName evidence="1">UK</shortName>
        <ecNumber evidence="1">2.7.4.22</ecNumber>
    </recommendedName>
    <alternativeName>
        <fullName evidence="1">Uridine monophosphate kinase</fullName>
        <shortName evidence="1">UMP kinase</shortName>
        <shortName evidence="1">UMPK</shortName>
    </alternativeName>
</protein>